<sequence length="509" mass="58536">MDPPRASHLSPRKKRPRQTGALMASSPQDIKFQDLVVFILEKKMGTTRRAFLMELARRKGFRVENELSDSVTHIVAENNSGSDVLEWLQAQKVQVSSQPELLDVSWLIECIRAGKPVEMTGKHQLVVRRDYSDSTNPGPPKTPPIAVQKISQYACQRRTTLNNCNQIFTDAFDILAENCEFRENEDSCVTFMRAASVLKSLPFTIISMKDTEGIPCLGSKVKGIIEEIIEDGESSEVKAVLNDERYQSFKLFTSVFGVGLKTSEKWFRMGFRTLSKVRSDKSLKFTRMQKAGFLYYEDLVSCVTRAEAEAVSVLVKEAVWAFLPDAFVTMTGGFRRGKKMGHDVDFLITSPGSTEDEEQLLQKVMNLWEKKGLLLYYDLVESTFEKLRLPSRKVDALDHFQKCFLIFKLPRQRVDSDQSSWQEGKTWKAIRVDLVLCPYERRAFALLGWTGSRQFERDLRRYATHERKMILDNHALYDKTKRIFLKAESEEEIFAHLGLDYIEPWERNA</sequence>
<protein>
    <recommendedName>
        <fullName>DNA nucleotidylexotransferase</fullName>
        <ecNumber evidence="5 10 13">2.7.7.31</ecNumber>
    </recommendedName>
    <alternativeName>
        <fullName>Terminal addition enzyme</fullName>
    </alternativeName>
    <alternativeName>
        <fullName>Terminal deoxynucleotidyltransferase</fullName>
        <shortName evidence="15">Terminal transferase</shortName>
    </alternativeName>
</protein>
<feature type="chain" id="PRO_0000218791" description="DNA nucleotidylexotransferase">
    <location>
        <begin position="1"/>
        <end position="509"/>
    </location>
</feature>
<feature type="domain" description="BRCT" evidence="3">
    <location>
        <begin position="27"/>
        <end position="124"/>
    </location>
</feature>
<feature type="region of interest" description="Disordered" evidence="4">
    <location>
        <begin position="1"/>
        <end position="24"/>
    </location>
</feature>
<feature type="region of interest" description="Mediates interaction with DNTTIP2" evidence="7">
    <location>
        <begin position="151"/>
        <end position="509"/>
    </location>
</feature>
<feature type="region of interest" description="Involved in DNA binding" evidence="2">
    <location>
        <begin position="258"/>
        <end position="262"/>
    </location>
</feature>
<feature type="short sequence motif" description="Nuclear localization signal" evidence="1">
    <location>
        <begin position="11"/>
        <end position="17"/>
    </location>
</feature>
<feature type="binding site" evidence="2">
    <location>
        <begin position="333"/>
        <end position="338"/>
    </location>
    <ligand>
        <name>a 2'-deoxyribonucleoside 5'-triphosphate</name>
        <dbReference type="ChEBI" id="CHEBI:61560"/>
    </ligand>
</feature>
<feature type="binding site" evidence="2">
    <location>
        <begin position="342"/>
        <end position="345"/>
    </location>
    <ligand>
        <name>a 2'-deoxyribonucleoside 5'-triphosphate</name>
        <dbReference type="ChEBI" id="CHEBI:61560"/>
    </ligand>
</feature>
<feature type="binding site" evidence="2">
    <location>
        <position position="343"/>
    </location>
    <ligand>
        <name>Mg(2+)</name>
        <dbReference type="ChEBI" id="CHEBI:18420"/>
    </ligand>
</feature>
<feature type="binding site" evidence="2">
    <location>
        <position position="345"/>
    </location>
    <ligand>
        <name>Mg(2+)</name>
        <dbReference type="ChEBI" id="CHEBI:18420"/>
    </ligand>
</feature>
<feature type="binding site" evidence="2">
    <location>
        <position position="433"/>
    </location>
    <ligand>
        <name>Mg(2+)</name>
        <dbReference type="ChEBI" id="CHEBI:18420"/>
    </ligand>
</feature>
<feature type="binding site" evidence="2">
    <location>
        <begin position="448"/>
        <end position="449"/>
    </location>
    <ligand>
        <name>a 2'-deoxyribonucleoside 5'-triphosphate</name>
        <dbReference type="ChEBI" id="CHEBI:61560"/>
    </ligand>
</feature>
<feature type="modified residue" description="Phosphoserine" evidence="2">
    <location>
        <position position="134"/>
    </location>
</feature>
<feature type="splice variant" id="VSP_038397" description="In isoform 2." evidence="16 17">
    <location>
        <position position="454"/>
    </location>
</feature>
<feature type="sequence variant" id="VAR_058200" description="In dbSNP:rs6584066." evidence="6 9 11 12 14">
    <original>R</original>
    <variation>G</variation>
    <location>
        <position position="112"/>
    </location>
</feature>
<feature type="mutagenesis site" description="Nearly abolishes enzyme activity." evidence="13">
    <original>D</original>
    <variation>E</variation>
    <location>
        <position position="343"/>
    </location>
</feature>
<feature type="sequence conflict" description="In Ref. 4; BAD97037." evidence="18" ref="4">
    <original>F</original>
    <variation>L</variation>
    <location>
        <position position="51"/>
    </location>
</feature>
<feature type="sequence conflict" description="In Ref. 4; BAD97037." evidence="18" ref="4">
    <original>L</original>
    <variation>P</variation>
    <location>
        <position position="299"/>
    </location>
</feature>
<feature type="sequence conflict" description="In Ref. 4; BAD97037." evidence="18" ref="4">
    <original>T</original>
    <variation>A</variation>
    <location>
        <position position="329"/>
    </location>
</feature>
<feature type="sequence conflict" description="In Ref. 4; BAD97037." evidence="18" ref="4">
    <original>T</original>
    <variation>A</variation>
    <location>
        <position position="383"/>
    </location>
</feature>
<feature type="sequence conflict" description="In Ref. 4; BAD97037." evidence="18" ref="4">
    <original>L</original>
    <variation>M</variation>
    <location>
        <position position="389"/>
    </location>
</feature>
<feature type="sequence conflict" description="In Ref. 2; AAA53100." evidence="18" ref="2">
    <original>S</original>
    <variation>SP</variation>
    <location>
        <position position="452"/>
    </location>
</feature>
<feature type="strand" evidence="20">
    <location>
        <begin position="23"/>
        <end position="25"/>
    </location>
</feature>
<feature type="strand" evidence="20">
    <location>
        <begin position="36"/>
        <end position="40"/>
    </location>
</feature>
<feature type="turn" evidence="20">
    <location>
        <begin position="42"/>
        <end position="44"/>
    </location>
</feature>
<feature type="helix" evidence="20">
    <location>
        <begin position="46"/>
        <end position="58"/>
    </location>
</feature>
<feature type="strand" evidence="20">
    <location>
        <begin position="73"/>
        <end position="78"/>
    </location>
</feature>
<feature type="helix" evidence="20">
    <location>
        <begin position="81"/>
        <end position="90"/>
    </location>
</feature>
<feature type="strand" evidence="20">
    <location>
        <begin position="100"/>
        <end position="103"/>
    </location>
</feature>
<feature type="helix" evidence="20">
    <location>
        <begin position="104"/>
        <end position="112"/>
    </location>
</feature>
<feature type="strand" evidence="20">
    <location>
        <begin position="120"/>
        <end position="124"/>
    </location>
</feature>
<accession>P04053</accession>
<accession>Q53FH1</accession>
<accession>Q5W103</accession>
<accession>Q96E50</accession>
<reference key="1">
    <citation type="journal article" date="1985" name="J. Biol. Chem.">
        <title>Expression of human terminal deoxynucleotidyl transferase in Escherichia coli.</title>
        <authorList>
            <person name="Peterson R.C."/>
            <person name="Cheung L.C."/>
            <person name="Mattaliano R.J."/>
            <person name="White S.T."/>
            <person name="Chang L.M.S."/>
            <person name="Bollum F.J."/>
        </authorList>
    </citation>
    <scope>NUCLEOTIDE SEQUENCE [MRNA] (ISOFORM 2)</scope>
    <scope>VARIANT GLY-112</scope>
</reference>
<reference key="2">
    <citation type="journal article" date="1988" name="Proc. Natl. Acad. Sci. U.S.A.">
        <title>Human terminal deoxyribonucleotidyltransferase: molecular cloning and structural analysis of the gene and 5' flanking region.</title>
        <authorList>
            <person name="Riley L.K."/>
            <person name="Morrow J.K."/>
            <person name="Danton M.J."/>
            <person name="Coleman M.S."/>
        </authorList>
    </citation>
    <scope>NUCLEOTIDE SEQUENCE [MRNA] (ISOFORM 1)</scope>
    <scope>VARIANT GLY-112</scope>
</reference>
<reference key="3">
    <citation type="journal article" date="2001" name="Genes Cells">
        <title>Terminal deoxynucleotidyltransferase is negatively regulated by direct interaction with proliferating cell nuclear antigen.</title>
        <authorList>
            <person name="Ibe S."/>
            <person name="Fujita K."/>
            <person name="Toyomoto T."/>
            <person name="Shimazaki N."/>
            <person name="Kaneko R."/>
            <person name="Tanabe A."/>
            <person name="Takebe I."/>
            <person name="Kuroda S."/>
            <person name="Kobayashi T."/>
            <person name="Toji S."/>
            <person name="Tamai K."/>
            <person name="Yamamoto H."/>
            <person name="Koiwai O."/>
        </authorList>
    </citation>
    <scope>NUCLEOTIDE SEQUENCE [MRNA] (ISOFORM 1)</scope>
    <scope>VARIANT GLY-112</scope>
</reference>
<reference key="4">
    <citation type="submission" date="2005-04" db="EMBL/GenBank/DDBJ databases">
        <authorList>
            <person name="Suzuki Y."/>
            <person name="Sugano S."/>
            <person name="Totoki Y."/>
            <person name="Toyoda A."/>
            <person name="Takeda T."/>
            <person name="Sakaki Y."/>
            <person name="Tanaka A."/>
            <person name="Yokoyama S."/>
        </authorList>
    </citation>
    <scope>NUCLEOTIDE SEQUENCE [LARGE SCALE MRNA] (ISOFORM 1)</scope>
    <scope>VARIANT GLY-112</scope>
    <source>
        <tissue>Thymus</tissue>
    </source>
</reference>
<reference key="5">
    <citation type="journal article" date="2004" name="Nature">
        <title>The DNA sequence and comparative analysis of human chromosome 10.</title>
        <authorList>
            <person name="Deloukas P."/>
            <person name="Earthrowl M.E."/>
            <person name="Grafham D.V."/>
            <person name="Rubenfield M."/>
            <person name="French L."/>
            <person name="Steward C.A."/>
            <person name="Sims S.K."/>
            <person name="Jones M.C."/>
            <person name="Searle S."/>
            <person name="Scott C."/>
            <person name="Howe K."/>
            <person name="Hunt S.E."/>
            <person name="Andrews T.D."/>
            <person name="Gilbert J.G.R."/>
            <person name="Swarbreck D."/>
            <person name="Ashurst J.L."/>
            <person name="Taylor A."/>
            <person name="Battles J."/>
            <person name="Bird C.P."/>
            <person name="Ainscough R."/>
            <person name="Almeida J.P."/>
            <person name="Ashwell R.I.S."/>
            <person name="Ambrose K.D."/>
            <person name="Babbage A.K."/>
            <person name="Bagguley C.L."/>
            <person name="Bailey J."/>
            <person name="Banerjee R."/>
            <person name="Bates K."/>
            <person name="Beasley H."/>
            <person name="Bray-Allen S."/>
            <person name="Brown A.J."/>
            <person name="Brown J.Y."/>
            <person name="Burford D.C."/>
            <person name="Burrill W."/>
            <person name="Burton J."/>
            <person name="Cahill P."/>
            <person name="Camire D."/>
            <person name="Carter N.P."/>
            <person name="Chapman J.C."/>
            <person name="Clark S.Y."/>
            <person name="Clarke G."/>
            <person name="Clee C.M."/>
            <person name="Clegg S."/>
            <person name="Corby N."/>
            <person name="Coulson A."/>
            <person name="Dhami P."/>
            <person name="Dutta I."/>
            <person name="Dunn M."/>
            <person name="Faulkner L."/>
            <person name="Frankish A."/>
            <person name="Frankland J.A."/>
            <person name="Garner P."/>
            <person name="Garnett J."/>
            <person name="Gribble S."/>
            <person name="Griffiths C."/>
            <person name="Grocock R."/>
            <person name="Gustafson E."/>
            <person name="Hammond S."/>
            <person name="Harley J.L."/>
            <person name="Hart E."/>
            <person name="Heath P.D."/>
            <person name="Ho T.P."/>
            <person name="Hopkins B."/>
            <person name="Horne J."/>
            <person name="Howden P.J."/>
            <person name="Huckle E."/>
            <person name="Hynds C."/>
            <person name="Johnson C."/>
            <person name="Johnson D."/>
            <person name="Kana A."/>
            <person name="Kay M."/>
            <person name="Kimberley A.M."/>
            <person name="Kershaw J.K."/>
            <person name="Kokkinaki M."/>
            <person name="Laird G.K."/>
            <person name="Lawlor S."/>
            <person name="Lee H.M."/>
            <person name="Leongamornlert D.A."/>
            <person name="Laird G."/>
            <person name="Lloyd C."/>
            <person name="Lloyd D.M."/>
            <person name="Loveland J."/>
            <person name="Lovell J."/>
            <person name="McLaren S."/>
            <person name="McLay K.E."/>
            <person name="McMurray A."/>
            <person name="Mashreghi-Mohammadi M."/>
            <person name="Matthews L."/>
            <person name="Milne S."/>
            <person name="Nickerson T."/>
            <person name="Nguyen M."/>
            <person name="Overton-Larty E."/>
            <person name="Palmer S.A."/>
            <person name="Pearce A.V."/>
            <person name="Peck A.I."/>
            <person name="Pelan S."/>
            <person name="Phillimore B."/>
            <person name="Porter K."/>
            <person name="Rice C.M."/>
            <person name="Rogosin A."/>
            <person name="Ross M.T."/>
            <person name="Sarafidou T."/>
            <person name="Sehra H.K."/>
            <person name="Shownkeen R."/>
            <person name="Skuce C.D."/>
            <person name="Smith M."/>
            <person name="Standring L."/>
            <person name="Sycamore N."/>
            <person name="Tester J."/>
            <person name="Thorpe A."/>
            <person name="Torcasso W."/>
            <person name="Tracey A."/>
            <person name="Tromans A."/>
            <person name="Tsolas J."/>
            <person name="Wall M."/>
            <person name="Walsh J."/>
            <person name="Wang H."/>
            <person name="Weinstock K."/>
            <person name="West A.P."/>
            <person name="Willey D.L."/>
            <person name="Whitehead S.L."/>
            <person name="Wilming L."/>
            <person name="Wray P.W."/>
            <person name="Young L."/>
            <person name="Chen Y."/>
            <person name="Lovering R.C."/>
            <person name="Moschonas N.K."/>
            <person name="Siebert R."/>
            <person name="Fechtel K."/>
            <person name="Bentley D."/>
            <person name="Durbin R.M."/>
            <person name="Hubbard T."/>
            <person name="Doucette-Stamm L."/>
            <person name="Beck S."/>
            <person name="Smith D.R."/>
            <person name="Rogers J."/>
        </authorList>
    </citation>
    <scope>NUCLEOTIDE SEQUENCE [LARGE SCALE GENOMIC DNA]</scope>
</reference>
<reference key="6">
    <citation type="journal article" date="2004" name="Genome Res.">
        <title>The status, quality, and expansion of the NIH full-length cDNA project: the Mammalian Gene Collection (MGC).</title>
        <authorList>
            <consortium name="The MGC Project Team"/>
        </authorList>
    </citation>
    <scope>NUCLEOTIDE SEQUENCE [LARGE SCALE MRNA] (ISOFORM 1)</scope>
    <scope>VARIANT GLY-112</scope>
    <source>
        <tissue>Testis</tissue>
    </source>
</reference>
<reference key="7">
    <citation type="journal article" date="1988" name="Biochem. Biophys. Res. Commun.">
        <title>Isolation of putative promoter region for human terminal deoxynucleotidyltransferase gene.</title>
        <authorList>
            <person name="Koiwai O."/>
            <person name="Morita A."/>
        </authorList>
    </citation>
    <scope>NUCLEOTIDE SEQUENCE [GENOMIC DNA] OF 1-67</scope>
</reference>
<reference key="8">
    <citation type="journal article" date="1984" name="Proc. Natl. Acad. Sci. U.S.A.">
        <title>Molecular cloning of human terminal deoxynucleotidyltransferase.</title>
        <authorList>
            <person name="Peterson R.C."/>
            <person name="Cheung L.C."/>
            <person name="Mattaliano R.J."/>
            <person name="Chang L.M.S."/>
            <person name="Bollum F.J."/>
        </authorList>
    </citation>
    <scope>NUCLEOTIDE SEQUENCE [MRNA] OF 271-508 (ISOFORM 2)</scope>
</reference>
<reference key="9">
    <citation type="journal article" date="1994" name="J. Biol. Chem.">
        <title>Mutational analysis of residues in the nucleotide binding domain of human terminal deoxynucleotidyl transferase.</title>
        <authorList>
            <person name="Yang B."/>
            <person name="Gathy K.N."/>
            <person name="Coleman M.S."/>
        </authorList>
    </citation>
    <scope>MUTAGENESIS OF ASP-343</scope>
    <scope>CATALYTIC ACTIVITY</scope>
</reference>
<reference key="10">
    <citation type="journal article" date="2001" name="Genes Cells">
        <title>Terminal deoxynucleotidyltransferase directly interacts with a novel nuclear protein that is homologous to p65.</title>
        <authorList>
            <person name="Yamashita N."/>
            <person name="Shimazaki N."/>
            <person name="Ibe S."/>
            <person name="Kaneko R."/>
            <person name="Tanabe A."/>
            <person name="Toyomoto T."/>
            <person name="Fujita K."/>
            <person name="Hasegawa T."/>
            <person name="Toji S."/>
            <person name="Tamai K."/>
            <person name="Yamamoto H."/>
            <person name="Koiwai O."/>
        </authorList>
    </citation>
    <scope>INTERACTION WITH DNTTIP1</scope>
    <scope>CATALYTIC ACTIVITY</scope>
    <scope>COFACTOR</scope>
    <source>
        <tissue>Thymus</tissue>
    </source>
</reference>
<reference key="11">
    <citation type="journal article" date="2003" name="Genes Cells">
        <title>Terminal deoxynucleotidyltransferase forms a ternary complex with a novel chromatin remodeling protein with 82 kDa and core histone.</title>
        <authorList>
            <person name="Fujita K."/>
            <person name="Shimazaki N."/>
            <person name="Ohta Y."/>
            <person name="Kubota T."/>
            <person name="Ibe S."/>
            <person name="Toji S."/>
            <person name="Tamai K."/>
            <person name="Fujisaki S."/>
            <person name="Hayano T."/>
            <person name="Koiwai O."/>
        </authorList>
    </citation>
    <scope>INTERACTION WITH DNTTIP2 AND CORE HISTONE</scope>
</reference>
<reference key="12">
    <citation type="journal article" date="2003" name="Proc. Natl. Acad. Sci. U.S.A.">
        <title>Role of human Pso4 in mammalian DNA repair and association with terminal deoxynucleotidyl transferase.</title>
        <authorList>
            <person name="Mahajan K.N."/>
            <person name="Mitchell B.S."/>
        </authorList>
    </citation>
    <scope>INTERACTION WITH PRP19</scope>
</reference>
<reference key="13">
    <citation type="journal article" date="2006" name="Genes Cells">
        <title>Direct binding of TReP-132 with TdT results in reduction of TdT activity.</title>
        <authorList>
            <person name="Fujisaki S."/>
            <person name="Sato A."/>
            <person name="Toyomoto T."/>
            <person name="Hayano T."/>
            <person name="Sugai M."/>
            <person name="Kubota T."/>
            <person name="Koiwai O."/>
        </authorList>
    </citation>
    <scope>INTERACTION WITH DNTTIP1 AND TRERF1</scope>
    <scope>SUBCELLULAR LOCATION</scope>
    <scope>CATALYTIC ACTIVITY</scope>
</reference>
<reference key="14">
    <citation type="submission" date="2005-11" db="PDB data bank">
        <title>Solution structure of BRCT domain of terminal deoxynucleotidyltransferase.</title>
        <authorList>
            <consortium name="RIKEN structural genomics initiative (RSGI)"/>
        </authorList>
    </citation>
    <scope>STRUCTURE BY NMR OF 19-125</scope>
</reference>
<gene>
    <name type="primary">DNTT</name>
    <name evidence="15" type="synonym">TDT</name>
</gene>
<keyword id="KW-0002">3D-structure</keyword>
<keyword id="KW-0025">Alternative splicing</keyword>
<keyword id="KW-0460">Magnesium</keyword>
<keyword id="KW-0479">Metal-binding</keyword>
<keyword id="KW-0548">Nucleotidyltransferase</keyword>
<keyword id="KW-0539">Nucleus</keyword>
<keyword id="KW-0597">Phosphoprotein</keyword>
<keyword id="KW-1267">Proteomics identification</keyword>
<keyword id="KW-1185">Reference proteome</keyword>
<keyword id="KW-0780">Terminal addition</keyword>
<keyword id="KW-0808">Transferase</keyword>
<name>TDT_HUMAN</name>
<comment type="function">
    <text evidence="2">Template-independent DNA polymerase which catalyzes the random addition of deoxynucleoside 5'-triphosphate to the 3'-end of a DNA initiator. One of the in vivo functions of this enzyme is the addition of nucleotides at the junction (N region) of rearranged Ig heavy chain and T-cell receptor gene segments during the maturation of B- and T-cells.</text>
</comment>
<comment type="catalytic activity">
    <reaction evidence="5 10 13">
        <text>DNA(n) + a 2'-deoxyribonucleoside 5'-triphosphate = DNA(n+1) + diphosphate</text>
        <dbReference type="Rhea" id="RHEA:22508"/>
        <dbReference type="Rhea" id="RHEA-COMP:17339"/>
        <dbReference type="Rhea" id="RHEA-COMP:17340"/>
        <dbReference type="ChEBI" id="CHEBI:33019"/>
        <dbReference type="ChEBI" id="CHEBI:61560"/>
        <dbReference type="ChEBI" id="CHEBI:173112"/>
        <dbReference type="EC" id="2.7.7.31"/>
    </reaction>
</comment>
<comment type="cofactor">
    <cofactor evidence="19">
        <name>Mg(2+)</name>
        <dbReference type="ChEBI" id="CHEBI:18420"/>
    </cofactor>
    <text evidence="2 18">Can also utilize other divalent cations, such as Mn(2+) and Co(2+) (in vitro).</text>
</comment>
<comment type="subunit">
    <text evidence="5 7 8 10">Interacts with PRP19 and DNTTIP1. Forms a ternary complex with DNTTIP2 and core histone. Released from this complex by PCNA. Interacts with TRERF1 (PubMed:16371131).</text>
</comment>
<comment type="interaction">
    <interactant intactId="EBI-1220259">
        <id>P04053</id>
    </interactant>
    <interactant intactId="EBI-19944212">
        <id>A8MW99</id>
        <label>MEI4</label>
    </interactant>
    <organismsDiffer>false</organismsDiffer>
    <experiments>3</experiments>
</comment>
<comment type="interaction">
    <interactant intactId="EBI-1220259">
        <id>P04053</id>
    </interactant>
    <interactant intactId="EBI-307352">
        <id>Q04864</id>
        <label>REL</label>
    </interactant>
    <organismsDiffer>false</organismsDiffer>
    <experiments>3</experiments>
</comment>
<comment type="interaction">
    <interactant intactId="EBI-1220259">
        <id>P04053</id>
    </interactant>
    <interactant intactId="EBI-13636688">
        <id>P15884-3</id>
        <label>TCF4</label>
    </interactant>
    <organismsDiffer>false</organismsDiffer>
    <experiments>3</experiments>
</comment>
<comment type="subcellular location">
    <subcellularLocation>
        <location evidence="10">Nucleus</location>
    </subcellularLocation>
</comment>
<comment type="alternative products">
    <event type="alternative splicing"/>
    <isoform>
        <id>P04053-1</id>
        <name>1</name>
        <sequence type="displayed"/>
    </isoform>
    <isoform>
        <id>P04053-2</id>
        <name>2</name>
        <sequence type="described" ref="VSP_038397"/>
    </isoform>
</comment>
<comment type="similarity">
    <text evidence="18">Belongs to the DNA polymerase type-X family.</text>
</comment>
<proteinExistence type="evidence at protein level"/>
<evidence type="ECO:0000250" key="1">
    <source>
        <dbReference type="UniProtKB" id="P06526"/>
    </source>
</evidence>
<evidence type="ECO:0000250" key="2">
    <source>
        <dbReference type="UniProtKB" id="P09838"/>
    </source>
</evidence>
<evidence type="ECO:0000255" key="3">
    <source>
        <dbReference type="PROSITE-ProRule" id="PRU00033"/>
    </source>
</evidence>
<evidence type="ECO:0000256" key="4">
    <source>
        <dbReference type="SAM" id="MobiDB-lite"/>
    </source>
</evidence>
<evidence type="ECO:0000269" key="5">
    <source>
    </source>
</evidence>
<evidence type="ECO:0000269" key="6">
    <source>
    </source>
</evidence>
<evidence type="ECO:0000269" key="7">
    <source>
    </source>
</evidence>
<evidence type="ECO:0000269" key="8">
    <source>
    </source>
</evidence>
<evidence type="ECO:0000269" key="9">
    <source>
    </source>
</evidence>
<evidence type="ECO:0000269" key="10">
    <source>
    </source>
</evidence>
<evidence type="ECO:0000269" key="11">
    <source>
    </source>
</evidence>
<evidence type="ECO:0000269" key="12">
    <source>
    </source>
</evidence>
<evidence type="ECO:0000269" key="13">
    <source>
    </source>
</evidence>
<evidence type="ECO:0000269" key="14">
    <source ref="4"/>
</evidence>
<evidence type="ECO:0000303" key="15">
    <source>
    </source>
</evidence>
<evidence type="ECO:0000303" key="16">
    <source>
    </source>
</evidence>
<evidence type="ECO:0000303" key="17">
    <source>
    </source>
</evidence>
<evidence type="ECO:0000305" key="18"/>
<evidence type="ECO:0000305" key="19">
    <source>
    </source>
</evidence>
<evidence type="ECO:0007829" key="20">
    <source>
        <dbReference type="PDB" id="2COE"/>
    </source>
</evidence>
<dbReference type="EC" id="2.7.7.31" evidence="5 10 13"/>
<dbReference type="EMBL" id="M11722">
    <property type="protein sequence ID" value="AAA36726.1"/>
    <property type="molecule type" value="mRNA"/>
</dbReference>
<dbReference type="EMBL" id="M20703">
    <property type="protein sequence ID" value="AAA53100.1"/>
    <property type="molecule type" value="mRNA"/>
</dbReference>
<dbReference type="EMBL" id="M22968">
    <property type="protein sequence ID" value="AAA53100.1"/>
    <property type="status" value="JOINED"/>
    <property type="molecule type" value="mRNA"/>
</dbReference>
<dbReference type="EMBL" id="M20694">
    <property type="protein sequence ID" value="AAA53100.1"/>
    <property type="status" value="JOINED"/>
    <property type="molecule type" value="mRNA"/>
</dbReference>
<dbReference type="EMBL" id="M20695">
    <property type="protein sequence ID" value="AAA53100.1"/>
    <property type="status" value="JOINED"/>
    <property type="molecule type" value="mRNA"/>
</dbReference>
<dbReference type="EMBL" id="M20696">
    <property type="protein sequence ID" value="AAA53100.1"/>
    <property type="status" value="JOINED"/>
    <property type="molecule type" value="mRNA"/>
</dbReference>
<dbReference type="EMBL" id="M20697">
    <property type="protein sequence ID" value="AAA53100.1"/>
    <property type="status" value="JOINED"/>
    <property type="molecule type" value="mRNA"/>
</dbReference>
<dbReference type="EMBL" id="M20698">
    <property type="protein sequence ID" value="AAA53100.1"/>
    <property type="status" value="JOINED"/>
    <property type="molecule type" value="mRNA"/>
</dbReference>
<dbReference type="EMBL" id="M20699">
    <property type="protein sequence ID" value="AAA53100.1"/>
    <property type="status" value="JOINED"/>
    <property type="molecule type" value="mRNA"/>
</dbReference>
<dbReference type="EMBL" id="M20700">
    <property type="protein sequence ID" value="AAA53100.1"/>
    <property type="status" value="JOINED"/>
    <property type="molecule type" value="mRNA"/>
</dbReference>
<dbReference type="EMBL" id="M20701">
    <property type="protein sequence ID" value="AAA53100.1"/>
    <property type="status" value="JOINED"/>
    <property type="molecule type" value="mRNA"/>
</dbReference>
<dbReference type="EMBL" id="M20702">
    <property type="protein sequence ID" value="AAA53100.1"/>
    <property type="status" value="JOINED"/>
    <property type="molecule type" value="mRNA"/>
</dbReference>
<dbReference type="EMBL" id="AB046378">
    <property type="protein sequence ID" value="BAB72001.1"/>
    <property type="molecule type" value="mRNA"/>
</dbReference>
<dbReference type="EMBL" id="AK223317">
    <property type="protein sequence ID" value="BAD97037.1"/>
    <property type="molecule type" value="mRNA"/>
</dbReference>
<dbReference type="EMBL" id="AL136181">
    <property type="status" value="NOT_ANNOTATED_CDS"/>
    <property type="molecule type" value="Genomic_DNA"/>
</dbReference>
<dbReference type="EMBL" id="BC012920">
    <property type="protein sequence ID" value="AAH12920.1"/>
    <property type="molecule type" value="mRNA"/>
</dbReference>
<dbReference type="EMBL" id="M21195">
    <property type="protein sequence ID" value="AAA61137.1"/>
    <property type="molecule type" value="Genomic_DNA"/>
</dbReference>
<dbReference type="EMBL" id="K01919">
    <property type="protein sequence ID" value="AAA61136.1"/>
    <property type="molecule type" value="mRNA"/>
</dbReference>
<dbReference type="CCDS" id="CCDS44465.1">
    <molecule id="P04053-2"/>
</dbReference>
<dbReference type="CCDS" id="CCDS7447.1">
    <molecule id="P04053-1"/>
</dbReference>
<dbReference type="PIR" id="A23924">
    <property type="entry name" value="WXHU"/>
</dbReference>
<dbReference type="RefSeq" id="NP_001017520.1">
    <molecule id="P04053-2"/>
    <property type="nucleotide sequence ID" value="NM_001017520.2"/>
</dbReference>
<dbReference type="RefSeq" id="NP_004079.3">
    <molecule id="P04053-1"/>
    <property type="nucleotide sequence ID" value="NM_004088.3"/>
</dbReference>
<dbReference type="PDB" id="2COE">
    <property type="method" value="NMR"/>
    <property type="chains" value="A=19-125"/>
</dbReference>
<dbReference type="PDB" id="5W4E">
    <property type="method" value="X-ray"/>
    <property type="resolution" value="2.18 A"/>
    <property type="chains" value="A/D=7-22"/>
</dbReference>
<dbReference type="PDBsum" id="2COE"/>
<dbReference type="PDBsum" id="5W4E"/>
<dbReference type="SMR" id="P04053"/>
<dbReference type="BioGRID" id="108127">
    <property type="interactions" value="13"/>
</dbReference>
<dbReference type="CORUM" id="P04053"/>
<dbReference type="FunCoup" id="P04053">
    <property type="interactions" value="187"/>
</dbReference>
<dbReference type="IntAct" id="P04053">
    <property type="interactions" value="6"/>
</dbReference>
<dbReference type="STRING" id="9606.ENSP00000360216"/>
<dbReference type="BindingDB" id="P04053"/>
<dbReference type="ChEMBL" id="CHEMBL4810"/>
<dbReference type="DrugBank" id="DB02189">
    <property type="generic name" value="2',3'-Dideoxyadenosine triphosphate"/>
</dbReference>
<dbReference type="GlyGen" id="P04053">
    <property type="glycosylation" value="1 site, 1 O-linked glycan (1 site)"/>
</dbReference>
<dbReference type="iPTMnet" id="P04053"/>
<dbReference type="PhosphoSitePlus" id="P04053"/>
<dbReference type="BioMuta" id="DNTT"/>
<dbReference type="DMDM" id="311033533"/>
<dbReference type="jPOST" id="P04053"/>
<dbReference type="MassIVE" id="P04053"/>
<dbReference type="PaxDb" id="9606-ENSP00000360216"/>
<dbReference type="PeptideAtlas" id="P04053"/>
<dbReference type="ProteomicsDB" id="51639">
    <molecule id="P04053-1"/>
</dbReference>
<dbReference type="ProteomicsDB" id="51640">
    <molecule id="P04053-2"/>
</dbReference>
<dbReference type="Antibodypedia" id="16924">
    <property type="antibodies" value="640 antibodies from 43 providers"/>
</dbReference>
<dbReference type="DNASU" id="1791"/>
<dbReference type="Ensembl" id="ENST00000371174.5">
    <molecule id="P04053-1"/>
    <property type="protein sequence ID" value="ENSP00000360216.2"/>
    <property type="gene ID" value="ENSG00000107447.8"/>
</dbReference>
<dbReference type="Ensembl" id="ENST00000630152.1">
    <molecule id="P04053-2"/>
    <property type="protein sequence ID" value="ENSP00000486733.1"/>
    <property type="gene ID" value="ENSG00000107447.8"/>
</dbReference>
<dbReference type="GeneID" id="1791"/>
<dbReference type="KEGG" id="hsa:1791"/>
<dbReference type="MANE-Select" id="ENST00000371174.5">
    <property type="protein sequence ID" value="ENSP00000360216.2"/>
    <property type="RefSeq nucleotide sequence ID" value="NM_004088.4"/>
    <property type="RefSeq protein sequence ID" value="NP_004079.3"/>
</dbReference>
<dbReference type="UCSC" id="uc001kmf.4">
    <molecule id="P04053-1"/>
    <property type="organism name" value="human"/>
</dbReference>
<dbReference type="AGR" id="HGNC:2983"/>
<dbReference type="CTD" id="1791"/>
<dbReference type="DisGeNET" id="1791"/>
<dbReference type="GeneCards" id="DNTT"/>
<dbReference type="HGNC" id="HGNC:2983">
    <property type="gene designation" value="DNTT"/>
</dbReference>
<dbReference type="HPA" id="ENSG00000107447">
    <property type="expression patterns" value="Tissue enriched (lymphoid)"/>
</dbReference>
<dbReference type="MalaCards" id="DNTT"/>
<dbReference type="MIM" id="187410">
    <property type="type" value="gene"/>
</dbReference>
<dbReference type="neXtProt" id="NX_P04053"/>
<dbReference type="OpenTargets" id="ENSG00000107447"/>
<dbReference type="PharmGKB" id="PA27449"/>
<dbReference type="VEuPathDB" id="HostDB:ENSG00000107447"/>
<dbReference type="eggNOG" id="KOG2534">
    <property type="taxonomic scope" value="Eukaryota"/>
</dbReference>
<dbReference type="GeneTree" id="ENSGT00940000158584"/>
<dbReference type="HOGENOM" id="CLU_008698_0_0_1"/>
<dbReference type="InParanoid" id="P04053"/>
<dbReference type="OMA" id="PKVINLW"/>
<dbReference type="OrthoDB" id="205514at2759"/>
<dbReference type="PAN-GO" id="P04053">
    <property type="GO annotations" value="3 GO annotations based on evolutionary models"/>
</dbReference>
<dbReference type="PhylomeDB" id="P04053"/>
<dbReference type="TreeFam" id="TF103012"/>
<dbReference type="BRENDA" id="2.7.7.31">
    <property type="organism ID" value="2681"/>
</dbReference>
<dbReference type="PathwayCommons" id="P04053"/>
<dbReference type="SABIO-RK" id="P04053"/>
<dbReference type="SignaLink" id="P04053"/>
<dbReference type="BioGRID-ORCS" id="1791">
    <property type="hits" value="14 hits in 1149 CRISPR screens"/>
</dbReference>
<dbReference type="ChiTaRS" id="DNTT">
    <property type="organism name" value="human"/>
</dbReference>
<dbReference type="EvolutionaryTrace" id="P04053"/>
<dbReference type="GeneWiki" id="Terminal_deoxynucleotidyl_transferase"/>
<dbReference type="GenomeRNAi" id="1791"/>
<dbReference type="Pharos" id="P04053">
    <property type="development level" value="Tchem"/>
</dbReference>
<dbReference type="PRO" id="PR:P04053"/>
<dbReference type="Proteomes" id="UP000005640">
    <property type="component" value="Chromosome 10"/>
</dbReference>
<dbReference type="RNAct" id="P04053">
    <property type="molecule type" value="protein"/>
</dbReference>
<dbReference type="Bgee" id="ENSG00000107447">
    <property type="expression patterns" value="Expressed in thymus and 28 other cell types or tissues"/>
</dbReference>
<dbReference type="GO" id="GO:0005829">
    <property type="term" value="C:cytosol"/>
    <property type="evidence" value="ECO:0000314"/>
    <property type="project" value="HPA"/>
</dbReference>
<dbReference type="GO" id="GO:0000791">
    <property type="term" value="C:euchromatin"/>
    <property type="evidence" value="ECO:0007669"/>
    <property type="project" value="Ensembl"/>
</dbReference>
<dbReference type="GO" id="GO:0016363">
    <property type="term" value="C:nuclear matrix"/>
    <property type="evidence" value="ECO:0007669"/>
    <property type="project" value="Ensembl"/>
</dbReference>
<dbReference type="GO" id="GO:0005654">
    <property type="term" value="C:nucleoplasm"/>
    <property type="evidence" value="ECO:0000314"/>
    <property type="project" value="HPA"/>
</dbReference>
<dbReference type="GO" id="GO:0005634">
    <property type="term" value="C:nucleus"/>
    <property type="evidence" value="ECO:0000314"/>
    <property type="project" value="UniProtKB"/>
</dbReference>
<dbReference type="GO" id="GO:0003677">
    <property type="term" value="F:DNA binding"/>
    <property type="evidence" value="ECO:0007669"/>
    <property type="project" value="InterPro"/>
</dbReference>
<dbReference type="GO" id="GO:0003912">
    <property type="term" value="F:DNA nucleotidylexotransferase activity"/>
    <property type="evidence" value="ECO:0000314"/>
    <property type="project" value="UniProtKB"/>
</dbReference>
<dbReference type="GO" id="GO:0003887">
    <property type="term" value="F:DNA-directed DNA polymerase activity"/>
    <property type="evidence" value="ECO:0007669"/>
    <property type="project" value="InterPro"/>
</dbReference>
<dbReference type="GO" id="GO:0046872">
    <property type="term" value="F:metal ion binding"/>
    <property type="evidence" value="ECO:0007669"/>
    <property type="project" value="UniProtKB-KW"/>
</dbReference>
<dbReference type="GO" id="GO:0006259">
    <property type="term" value="P:DNA metabolic process"/>
    <property type="evidence" value="ECO:0000314"/>
    <property type="project" value="UniProtKB"/>
</dbReference>
<dbReference type="GO" id="GO:0006304">
    <property type="term" value="P:DNA modification"/>
    <property type="evidence" value="ECO:0007669"/>
    <property type="project" value="UniProtKB-KW"/>
</dbReference>
<dbReference type="GO" id="GO:0006303">
    <property type="term" value="P:double-strand break repair via nonhomologous end joining"/>
    <property type="evidence" value="ECO:0000318"/>
    <property type="project" value="GO_Central"/>
</dbReference>
<dbReference type="GO" id="GO:0033198">
    <property type="term" value="P:response to ATP"/>
    <property type="evidence" value="ECO:0007669"/>
    <property type="project" value="Ensembl"/>
</dbReference>
<dbReference type="CDD" id="cd18443">
    <property type="entry name" value="BRCT_DNTT"/>
    <property type="match status" value="1"/>
</dbReference>
<dbReference type="CDD" id="cd00141">
    <property type="entry name" value="NT_POLXc"/>
    <property type="match status" value="1"/>
</dbReference>
<dbReference type="FunFam" id="3.30.210.10:FF:000003">
    <property type="entry name" value="DNA nucleotidylexotransferase"/>
    <property type="match status" value="1"/>
</dbReference>
<dbReference type="FunFam" id="3.30.460.10:FF:000028">
    <property type="entry name" value="DNA nucleotidylexotransferase"/>
    <property type="match status" value="1"/>
</dbReference>
<dbReference type="FunFam" id="3.40.50.10190:FF:000041">
    <property type="entry name" value="DNA nucleotidylexotransferase"/>
    <property type="match status" value="1"/>
</dbReference>
<dbReference type="FunFam" id="1.10.150.20:FF:000010">
    <property type="entry name" value="DNA polymerase lambda"/>
    <property type="match status" value="1"/>
</dbReference>
<dbReference type="FunFam" id="1.10.150.110:FF:000003">
    <property type="entry name" value="DNA polymerase mu"/>
    <property type="match status" value="1"/>
</dbReference>
<dbReference type="Gene3D" id="1.10.150.20">
    <property type="entry name" value="5' to 3' exonuclease, C-terminal subdomain"/>
    <property type="match status" value="1"/>
</dbReference>
<dbReference type="Gene3D" id="3.30.460.10">
    <property type="entry name" value="Beta Polymerase, domain 2"/>
    <property type="match status" value="1"/>
</dbReference>
<dbReference type="Gene3D" id="3.40.50.10190">
    <property type="entry name" value="BRCT domain"/>
    <property type="match status" value="1"/>
</dbReference>
<dbReference type="Gene3D" id="1.10.150.110">
    <property type="entry name" value="DNA polymerase beta, N-terminal domain-like"/>
    <property type="match status" value="1"/>
</dbReference>
<dbReference type="Gene3D" id="3.30.210.10">
    <property type="entry name" value="DNA polymerase, thumb domain"/>
    <property type="match status" value="1"/>
</dbReference>
<dbReference type="InterPro" id="IPR001357">
    <property type="entry name" value="BRCT_dom"/>
</dbReference>
<dbReference type="InterPro" id="IPR036420">
    <property type="entry name" value="BRCT_dom_sf"/>
</dbReference>
<dbReference type="InterPro" id="IPR002054">
    <property type="entry name" value="DNA-dir_DNA_pol_X"/>
</dbReference>
<dbReference type="InterPro" id="IPR019843">
    <property type="entry name" value="DNA_pol-X_BS"/>
</dbReference>
<dbReference type="InterPro" id="IPR010996">
    <property type="entry name" value="DNA_pol_b-like_N"/>
</dbReference>
<dbReference type="InterPro" id="IPR018944">
    <property type="entry name" value="DNA_pol_lambd_fingers_domain"/>
</dbReference>
<dbReference type="InterPro" id="IPR027421">
    <property type="entry name" value="DNA_pol_lamdba_lyase_dom_sf"/>
</dbReference>
<dbReference type="InterPro" id="IPR037160">
    <property type="entry name" value="DNA_Pol_thumb_sf"/>
</dbReference>
<dbReference type="InterPro" id="IPR022312">
    <property type="entry name" value="DNA_pol_X"/>
</dbReference>
<dbReference type="InterPro" id="IPR043519">
    <property type="entry name" value="NT_sf"/>
</dbReference>
<dbReference type="InterPro" id="IPR029398">
    <property type="entry name" value="PolB_thumb"/>
</dbReference>
<dbReference type="InterPro" id="IPR002934">
    <property type="entry name" value="Polymerase_NTP_transf_dom"/>
</dbReference>
<dbReference type="InterPro" id="IPR027292">
    <property type="entry name" value="TdT"/>
</dbReference>
<dbReference type="InterPro" id="IPR001726">
    <property type="entry name" value="TdT/Mu"/>
</dbReference>
<dbReference type="PANTHER" id="PTHR11276:SF21">
    <property type="entry name" value="DNA NUCLEOTIDYLEXOTRANSFERASE"/>
    <property type="match status" value="1"/>
</dbReference>
<dbReference type="PANTHER" id="PTHR11276">
    <property type="entry name" value="DNA POLYMERASE TYPE-X FAMILY MEMBER"/>
    <property type="match status" value="1"/>
</dbReference>
<dbReference type="Pfam" id="PF00533">
    <property type="entry name" value="BRCT"/>
    <property type="match status" value="1"/>
</dbReference>
<dbReference type="Pfam" id="PF14791">
    <property type="entry name" value="DNA_pol_B_thumb"/>
    <property type="match status" value="1"/>
</dbReference>
<dbReference type="Pfam" id="PF10391">
    <property type="entry name" value="DNA_pol_lambd_f"/>
    <property type="match status" value="1"/>
</dbReference>
<dbReference type="Pfam" id="PF14716">
    <property type="entry name" value="HHH_8"/>
    <property type="match status" value="1"/>
</dbReference>
<dbReference type="Pfam" id="PF01909">
    <property type="entry name" value="NTP_transf_2"/>
    <property type="match status" value="1"/>
</dbReference>
<dbReference type="PIRSF" id="PIRSF000817">
    <property type="entry name" value="DNA_NT"/>
    <property type="match status" value="1"/>
</dbReference>
<dbReference type="PIRSF" id="PIRSF501175">
    <property type="entry name" value="TDT"/>
    <property type="match status" value="1"/>
</dbReference>
<dbReference type="PRINTS" id="PR00869">
    <property type="entry name" value="DNAPOLX"/>
</dbReference>
<dbReference type="PRINTS" id="PR00871">
    <property type="entry name" value="DNAPOLXTDT"/>
</dbReference>
<dbReference type="SMART" id="SM00292">
    <property type="entry name" value="BRCT"/>
    <property type="match status" value="1"/>
</dbReference>
<dbReference type="SMART" id="SM00483">
    <property type="entry name" value="POLXc"/>
    <property type="match status" value="1"/>
</dbReference>
<dbReference type="SUPFAM" id="SSF52113">
    <property type="entry name" value="BRCT domain"/>
    <property type="match status" value="1"/>
</dbReference>
<dbReference type="SUPFAM" id="SSF47802">
    <property type="entry name" value="DNA polymerase beta, N-terminal domain-like"/>
    <property type="match status" value="1"/>
</dbReference>
<dbReference type="SUPFAM" id="SSF81301">
    <property type="entry name" value="Nucleotidyltransferase"/>
    <property type="match status" value="1"/>
</dbReference>
<dbReference type="SUPFAM" id="SSF81585">
    <property type="entry name" value="PsbU/PolX domain-like"/>
    <property type="match status" value="1"/>
</dbReference>
<dbReference type="PROSITE" id="PS50172">
    <property type="entry name" value="BRCT"/>
    <property type="match status" value="1"/>
</dbReference>
<dbReference type="PROSITE" id="PS00522">
    <property type="entry name" value="DNA_POLYMERASE_X"/>
    <property type="match status" value="1"/>
</dbReference>
<organism>
    <name type="scientific">Homo sapiens</name>
    <name type="common">Human</name>
    <dbReference type="NCBI Taxonomy" id="9606"/>
    <lineage>
        <taxon>Eukaryota</taxon>
        <taxon>Metazoa</taxon>
        <taxon>Chordata</taxon>
        <taxon>Craniata</taxon>
        <taxon>Vertebrata</taxon>
        <taxon>Euteleostomi</taxon>
        <taxon>Mammalia</taxon>
        <taxon>Eutheria</taxon>
        <taxon>Euarchontoglires</taxon>
        <taxon>Primates</taxon>
        <taxon>Haplorrhini</taxon>
        <taxon>Catarrhini</taxon>
        <taxon>Hominidae</taxon>
        <taxon>Homo</taxon>
    </lineage>
</organism>